<protein>
    <recommendedName>
        <fullName>Pro-opiomelanocortin</fullName>
        <shortName>POMC</shortName>
    </recommendedName>
    <component>
        <recommendedName>
            <fullName>Corticotropin</fullName>
        </recommendedName>
        <alternativeName>
            <fullName>Adrenocorticotropic hormone</fullName>
            <shortName>ACTH</shortName>
        </alternativeName>
    </component>
    <component>
        <recommendedName>
            <fullName>Melanocyte-stimulating hormone alpha</fullName>
            <shortName>Alpha-MSH</shortName>
        </recommendedName>
        <alternativeName>
            <fullName>Melanotropin alpha</fullName>
        </alternativeName>
    </component>
    <component>
        <recommendedName>
            <fullName>Corticotropin-like intermediary peptide</fullName>
            <shortName>CLIP</shortName>
        </recommendedName>
    </component>
</protein>
<comment type="function">
    <text>Precursor protein for pituitary hormones that regulate stress and environmental adaptation.</text>
</comment>
<comment type="function">
    <molecule>Corticotropin</molecule>
    <text>Stimulates the adrenal glands to release cortisol.</text>
</comment>
<comment type="function">
    <molecule>Melanocyte-stimulating hormone alpha</molecule>
    <text>Anorexigenic peptide. Increases the pigmentation of skin by increasing melanin production in melanocytes.</text>
</comment>
<comment type="subcellular location">
    <subcellularLocation>
        <location evidence="2">Secreted</location>
    </subcellularLocation>
    <text evidence="2">Alpha-MSH and beta-endorphin are stored in separate granules in hypothalamic POMC neurons, suggesting that secretion may be under the control of different regulatory mechanisms.</text>
</comment>
<comment type="similarity">
    <text evidence="3">Belongs to the POMC family.</text>
</comment>
<keyword id="KW-0027">Amidation</keyword>
<keyword id="KW-0165">Cleavage on pair of basic residues</keyword>
<keyword id="KW-0903">Direct protein sequencing</keyword>
<keyword id="KW-0372">Hormone</keyword>
<keyword id="KW-0964">Secreted</keyword>
<evidence type="ECO:0000250" key="1">
    <source>
        <dbReference type="UniProtKB" id="P01190"/>
    </source>
</evidence>
<evidence type="ECO:0000250" key="2">
    <source>
        <dbReference type="UniProtKB" id="P01193"/>
    </source>
</evidence>
<evidence type="ECO:0000305" key="3"/>
<feature type="peptide" id="PRO_0000025147" description="Corticotropin">
    <location>
        <begin position="1"/>
        <end position="39"/>
    </location>
</feature>
<feature type="peptide" id="PRO_0000025148" description="Melanocyte-stimulating hormone alpha">
    <location>
        <begin position="1"/>
        <end position="13"/>
    </location>
</feature>
<feature type="peptide" id="PRO_0000025149" description="Corticotropin-like intermediary peptide">
    <location>
        <begin position="19"/>
        <end position="39"/>
    </location>
</feature>
<feature type="modified residue" description="Valine amide" evidence="1">
    <location>
        <position position="13"/>
    </location>
</feature>
<feature type="non-terminal residue">
    <location>
        <position position="1"/>
    </location>
</feature>
<feature type="non-terminal residue">
    <location>
        <position position="39"/>
    </location>
</feature>
<dbReference type="PIR" id="A01459">
    <property type="entry name" value="A01459"/>
</dbReference>
<dbReference type="SMR" id="P01196"/>
<dbReference type="GO" id="GO:0005615">
    <property type="term" value="C:extracellular space"/>
    <property type="evidence" value="ECO:0007669"/>
    <property type="project" value="TreeGrafter"/>
</dbReference>
<dbReference type="GO" id="GO:0030141">
    <property type="term" value="C:secretory granule"/>
    <property type="evidence" value="ECO:0007669"/>
    <property type="project" value="TreeGrafter"/>
</dbReference>
<dbReference type="GO" id="GO:0001664">
    <property type="term" value="F:G protein-coupled receptor binding"/>
    <property type="evidence" value="ECO:0007669"/>
    <property type="project" value="TreeGrafter"/>
</dbReference>
<dbReference type="GO" id="GO:0005179">
    <property type="term" value="F:hormone activity"/>
    <property type="evidence" value="ECO:0007669"/>
    <property type="project" value="UniProtKB-KW"/>
</dbReference>
<dbReference type="GO" id="GO:2000852">
    <property type="term" value="P:regulation of corticosterone secretion"/>
    <property type="evidence" value="ECO:0007669"/>
    <property type="project" value="TreeGrafter"/>
</dbReference>
<dbReference type="InterPro" id="IPR013531">
    <property type="entry name" value="Mcrtin_ACTH_cent"/>
</dbReference>
<dbReference type="InterPro" id="IPR001941">
    <property type="entry name" value="PMOC"/>
</dbReference>
<dbReference type="InterPro" id="IPR050878">
    <property type="entry name" value="POMC-derived_peptides"/>
</dbReference>
<dbReference type="PANTHER" id="PTHR11416">
    <property type="entry name" value="PRO-OPIOMELANOCORTIN"/>
    <property type="match status" value="1"/>
</dbReference>
<dbReference type="PANTHER" id="PTHR11416:SF7">
    <property type="entry name" value="PRO-OPIOMELANOCORTIN"/>
    <property type="match status" value="1"/>
</dbReference>
<dbReference type="Pfam" id="PF00976">
    <property type="entry name" value="ACTH_domain"/>
    <property type="match status" value="1"/>
</dbReference>
<dbReference type="PRINTS" id="PR00383">
    <property type="entry name" value="MELANOCORTIN"/>
</dbReference>
<dbReference type="SMART" id="SM01363">
    <property type="entry name" value="ACTH_domain"/>
    <property type="match status" value="1"/>
</dbReference>
<reference key="1">
    <citation type="journal article" date="1978" name="Biochem. Biophys. Res. Commun.">
        <title>Adrenocorticotropin 53. The amino acid sequence of the hormone from the ostrich pituitary gland.</title>
        <authorList>
            <person name="Li C.H."/>
            <person name="Chung D."/>
            <person name="Oelofsen W."/>
            <person name="Naude R.J."/>
        </authorList>
    </citation>
    <scope>PROTEIN SEQUENCE</scope>
</reference>
<proteinExistence type="evidence at protein level"/>
<organism>
    <name type="scientific">Struthio camelus</name>
    <name type="common">Common ostrich</name>
    <dbReference type="NCBI Taxonomy" id="8801"/>
    <lineage>
        <taxon>Eukaryota</taxon>
        <taxon>Metazoa</taxon>
        <taxon>Chordata</taxon>
        <taxon>Craniata</taxon>
        <taxon>Vertebrata</taxon>
        <taxon>Euteleostomi</taxon>
        <taxon>Archelosauria</taxon>
        <taxon>Archosauria</taxon>
        <taxon>Dinosauria</taxon>
        <taxon>Saurischia</taxon>
        <taxon>Theropoda</taxon>
        <taxon>Coelurosauria</taxon>
        <taxon>Aves</taxon>
        <taxon>Palaeognathae</taxon>
        <taxon>Struthioniformes</taxon>
        <taxon>Struthionidae</taxon>
        <taxon>Struthio</taxon>
    </lineage>
</organism>
<gene>
    <name type="primary">POMC</name>
</gene>
<name>COLI_STRCA</name>
<accession>P01196</accession>
<sequence length="39" mass="4626">SYSMEHFRWGKPVGRKRRPVKVYPNGVQEETSEGFPLEF</sequence>